<sequence>MGDTRVTVIGGGLAGTEAAWQLARAGVAVELVEMKPERRSPAHVLPGLAELVCSNSLRSDNPLNAVGLLHEELRRLGSLVLGCADETRVPAGDALAVDRERFSEAVTARLTGHAGVRIVHRELEELPPPPALAVIATGPLTADALAARLAETTGGRLHFYDAIAPIVAAESIDRSIAYARSRYGKGSGDDYLNLPLDEAQYHAFVEALLQGEKVAAHGFEEPRYFEGCLPIEVMAERGLEVLAHGPLKPVGLEDPRTGRRPHAVVQLRREDVDGTAWNLVGFQTRLTWPEQRRIFRAFLPGLANAEFVRLGQIHRNTFVDAPRVLAPDLSVRAAPHLFLAGQITGVEGYVESAACGLMAARAVLDRLAGRAFRPPPPATALGALHRHLTGEAHPPGYDYQPSNVVFALFPPLTGRHRGKAGRKEAHVERARKELAPWIDSAPPTAVPAAPAAG</sequence>
<accession>B8JES4</accession>
<organism>
    <name type="scientific">Anaeromyxobacter dehalogenans (strain 2CP-1 / ATCC BAA-258)</name>
    <dbReference type="NCBI Taxonomy" id="455488"/>
    <lineage>
        <taxon>Bacteria</taxon>
        <taxon>Pseudomonadati</taxon>
        <taxon>Myxococcota</taxon>
        <taxon>Myxococcia</taxon>
        <taxon>Myxococcales</taxon>
        <taxon>Cystobacterineae</taxon>
        <taxon>Anaeromyxobacteraceae</taxon>
        <taxon>Anaeromyxobacter</taxon>
    </lineage>
</organism>
<proteinExistence type="inferred from homology"/>
<keyword id="KW-0963">Cytoplasm</keyword>
<keyword id="KW-0274">FAD</keyword>
<keyword id="KW-0285">Flavoprotein</keyword>
<keyword id="KW-0489">Methyltransferase</keyword>
<keyword id="KW-0520">NAD</keyword>
<keyword id="KW-0521">NADP</keyword>
<keyword id="KW-0808">Transferase</keyword>
<keyword id="KW-0819">tRNA processing</keyword>
<gene>
    <name evidence="1" type="primary">trmFO</name>
    <name type="ordered locus">A2cp1_2883</name>
</gene>
<evidence type="ECO:0000255" key="1">
    <source>
        <dbReference type="HAMAP-Rule" id="MF_01037"/>
    </source>
</evidence>
<evidence type="ECO:0000256" key="2">
    <source>
        <dbReference type="SAM" id="MobiDB-lite"/>
    </source>
</evidence>
<name>TRMFO_ANAD2</name>
<feature type="chain" id="PRO_1000149462" description="Methylenetetrahydrofolate--tRNA-(uracil-5-)-methyltransferase TrmFO">
    <location>
        <begin position="1"/>
        <end position="453"/>
    </location>
</feature>
<feature type="region of interest" description="Disordered" evidence="2">
    <location>
        <begin position="433"/>
        <end position="453"/>
    </location>
</feature>
<feature type="compositionally biased region" description="Low complexity" evidence="2">
    <location>
        <begin position="441"/>
        <end position="453"/>
    </location>
</feature>
<feature type="binding site" evidence="1">
    <location>
        <begin position="10"/>
        <end position="15"/>
    </location>
    <ligand>
        <name>FAD</name>
        <dbReference type="ChEBI" id="CHEBI:57692"/>
    </ligand>
</feature>
<dbReference type="EC" id="2.1.1.74" evidence="1"/>
<dbReference type="EMBL" id="CP001359">
    <property type="protein sequence ID" value="ACL66220.1"/>
    <property type="molecule type" value="Genomic_DNA"/>
</dbReference>
<dbReference type="RefSeq" id="WP_012633969.1">
    <property type="nucleotide sequence ID" value="NC_011891.1"/>
</dbReference>
<dbReference type="SMR" id="B8JES4"/>
<dbReference type="KEGG" id="acp:A2cp1_2883"/>
<dbReference type="HOGENOM" id="CLU_033057_1_0_7"/>
<dbReference type="Proteomes" id="UP000007089">
    <property type="component" value="Chromosome"/>
</dbReference>
<dbReference type="GO" id="GO:0005829">
    <property type="term" value="C:cytosol"/>
    <property type="evidence" value="ECO:0007669"/>
    <property type="project" value="TreeGrafter"/>
</dbReference>
<dbReference type="GO" id="GO:0050660">
    <property type="term" value="F:flavin adenine dinucleotide binding"/>
    <property type="evidence" value="ECO:0007669"/>
    <property type="project" value="UniProtKB-UniRule"/>
</dbReference>
<dbReference type="GO" id="GO:0047151">
    <property type="term" value="F:tRNA (uracil(54)-C5)-methyltransferase activity, 5,10-methylenetetrahydrofolate-dependent"/>
    <property type="evidence" value="ECO:0007669"/>
    <property type="project" value="UniProtKB-UniRule"/>
</dbReference>
<dbReference type="GO" id="GO:0030488">
    <property type="term" value="P:tRNA methylation"/>
    <property type="evidence" value="ECO:0007669"/>
    <property type="project" value="TreeGrafter"/>
</dbReference>
<dbReference type="GO" id="GO:0002098">
    <property type="term" value="P:tRNA wobble uridine modification"/>
    <property type="evidence" value="ECO:0007669"/>
    <property type="project" value="TreeGrafter"/>
</dbReference>
<dbReference type="Gene3D" id="3.50.50.60">
    <property type="entry name" value="FAD/NAD(P)-binding domain"/>
    <property type="match status" value="2"/>
</dbReference>
<dbReference type="HAMAP" id="MF_01037">
    <property type="entry name" value="TrmFO"/>
    <property type="match status" value="1"/>
</dbReference>
<dbReference type="InterPro" id="IPR036188">
    <property type="entry name" value="FAD/NAD-bd_sf"/>
</dbReference>
<dbReference type="InterPro" id="IPR002218">
    <property type="entry name" value="MnmG-rel"/>
</dbReference>
<dbReference type="InterPro" id="IPR040131">
    <property type="entry name" value="MnmG_N"/>
</dbReference>
<dbReference type="InterPro" id="IPR004417">
    <property type="entry name" value="TrmFO"/>
</dbReference>
<dbReference type="NCBIfam" id="TIGR00137">
    <property type="entry name" value="gid_trmFO"/>
    <property type="match status" value="1"/>
</dbReference>
<dbReference type="NCBIfam" id="NF003739">
    <property type="entry name" value="PRK05335.1"/>
    <property type="match status" value="1"/>
</dbReference>
<dbReference type="PANTHER" id="PTHR11806">
    <property type="entry name" value="GLUCOSE INHIBITED DIVISION PROTEIN A"/>
    <property type="match status" value="1"/>
</dbReference>
<dbReference type="PANTHER" id="PTHR11806:SF2">
    <property type="entry name" value="METHYLENETETRAHYDROFOLATE--TRNA-(URACIL-5-)-METHYLTRANSFERASE TRMFO"/>
    <property type="match status" value="1"/>
</dbReference>
<dbReference type="Pfam" id="PF01134">
    <property type="entry name" value="GIDA"/>
    <property type="match status" value="1"/>
</dbReference>
<dbReference type="SUPFAM" id="SSF51905">
    <property type="entry name" value="FAD/NAD(P)-binding domain"/>
    <property type="match status" value="1"/>
</dbReference>
<comment type="function">
    <text evidence="1">Catalyzes the folate-dependent formation of 5-methyl-uridine at position 54 (M-5-U54) in all tRNAs.</text>
</comment>
<comment type="catalytic activity">
    <reaction evidence="1">
        <text>uridine(54) in tRNA + (6R)-5,10-methylene-5,6,7,8-tetrahydrofolate + NADH + H(+) = 5-methyluridine(54) in tRNA + (6S)-5,6,7,8-tetrahydrofolate + NAD(+)</text>
        <dbReference type="Rhea" id="RHEA:16873"/>
        <dbReference type="Rhea" id="RHEA-COMP:10167"/>
        <dbReference type="Rhea" id="RHEA-COMP:10193"/>
        <dbReference type="ChEBI" id="CHEBI:15378"/>
        <dbReference type="ChEBI" id="CHEBI:15636"/>
        <dbReference type="ChEBI" id="CHEBI:57453"/>
        <dbReference type="ChEBI" id="CHEBI:57540"/>
        <dbReference type="ChEBI" id="CHEBI:57945"/>
        <dbReference type="ChEBI" id="CHEBI:65315"/>
        <dbReference type="ChEBI" id="CHEBI:74447"/>
        <dbReference type="EC" id="2.1.1.74"/>
    </reaction>
</comment>
<comment type="catalytic activity">
    <reaction evidence="1">
        <text>uridine(54) in tRNA + (6R)-5,10-methylene-5,6,7,8-tetrahydrofolate + NADPH + H(+) = 5-methyluridine(54) in tRNA + (6S)-5,6,7,8-tetrahydrofolate + NADP(+)</text>
        <dbReference type="Rhea" id="RHEA:62372"/>
        <dbReference type="Rhea" id="RHEA-COMP:10167"/>
        <dbReference type="Rhea" id="RHEA-COMP:10193"/>
        <dbReference type="ChEBI" id="CHEBI:15378"/>
        <dbReference type="ChEBI" id="CHEBI:15636"/>
        <dbReference type="ChEBI" id="CHEBI:57453"/>
        <dbReference type="ChEBI" id="CHEBI:57783"/>
        <dbReference type="ChEBI" id="CHEBI:58349"/>
        <dbReference type="ChEBI" id="CHEBI:65315"/>
        <dbReference type="ChEBI" id="CHEBI:74447"/>
        <dbReference type="EC" id="2.1.1.74"/>
    </reaction>
</comment>
<comment type="cofactor">
    <cofactor evidence="1">
        <name>FAD</name>
        <dbReference type="ChEBI" id="CHEBI:57692"/>
    </cofactor>
</comment>
<comment type="subcellular location">
    <subcellularLocation>
        <location evidence="1">Cytoplasm</location>
    </subcellularLocation>
</comment>
<comment type="similarity">
    <text evidence="1">Belongs to the MnmG family. TrmFO subfamily.</text>
</comment>
<reference key="1">
    <citation type="submission" date="2009-01" db="EMBL/GenBank/DDBJ databases">
        <title>Complete sequence of Anaeromyxobacter dehalogenans 2CP-1.</title>
        <authorList>
            <person name="Lucas S."/>
            <person name="Copeland A."/>
            <person name="Lapidus A."/>
            <person name="Glavina del Rio T."/>
            <person name="Dalin E."/>
            <person name="Tice H."/>
            <person name="Bruce D."/>
            <person name="Goodwin L."/>
            <person name="Pitluck S."/>
            <person name="Saunders E."/>
            <person name="Brettin T."/>
            <person name="Detter J.C."/>
            <person name="Han C."/>
            <person name="Larimer F."/>
            <person name="Land M."/>
            <person name="Hauser L."/>
            <person name="Kyrpides N."/>
            <person name="Ovchinnikova G."/>
            <person name="Beliaev A.S."/>
            <person name="Richardson P."/>
        </authorList>
    </citation>
    <scope>NUCLEOTIDE SEQUENCE [LARGE SCALE GENOMIC DNA]</scope>
    <source>
        <strain>2CP-1 / ATCC BAA-258</strain>
    </source>
</reference>
<protein>
    <recommendedName>
        <fullName evidence="1">Methylenetetrahydrofolate--tRNA-(uracil-5-)-methyltransferase TrmFO</fullName>
        <ecNumber evidence="1">2.1.1.74</ecNumber>
    </recommendedName>
    <alternativeName>
        <fullName evidence="1">Folate-dependent tRNA (uracil-5-)-methyltransferase</fullName>
    </alternativeName>
    <alternativeName>
        <fullName evidence="1">Folate-dependent tRNA(M-5-U54)-methyltransferase</fullName>
    </alternativeName>
</protein>